<keyword id="KW-0004">4Fe-4S</keyword>
<keyword id="KW-0963">Cytoplasm</keyword>
<keyword id="KW-0408">Iron</keyword>
<keyword id="KW-0411">Iron-sulfur</keyword>
<keyword id="KW-0479">Metal-binding</keyword>
<keyword id="KW-1185">Reference proteome</keyword>
<keyword id="KW-0949">S-adenosyl-L-methionine</keyword>
<keyword id="KW-0808">Transferase</keyword>
<accession>Q7W0K8</accession>
<reference key="1">
    <citation type="journal article" date="2003" name="Nat. Genet.">
        <title>Comparative analysis of the genome sequences of Bordetella pertussis, Bordetella parapertussis and Bordetella bronchiseptica.</title>
        <authorList>
            <person name="Parkhill J."/>
            <person name="Sebaihia M."/>
            <person name="Preston A."/>
            <person name="Murphy L.D."/>
            <person name="Thomson N.R."/>
            <person name="Harris D.E."/>
            <person name="Holden M.T.G."/>
            <person name="Churcher C.M."/>
            <person name="Bentley S.D."/>
            <person name="Mungall K.L."/>
            <person name="Cerdeno-Tarraga A.-M."/>
            <person name="Temple L."/>
            <person name="James K.D."/>
            <person name="Harris B."/>
            <person name="Quail M.A."/>
            <person name="Achtman M."/>
            <person name="Atkin R."/>
            <person name="Baker S."/>
            <person name="Basham D."/>
            <person name="Bason N."/>
            <person name="Cherevach I."/>
            <person name="Chillingworth T."/>
            <person name="Collins M."/>
            <person name="Cronin A."/>
            <person name="Davis P."/>
            <person name="Doggett J."/>
            <person name="Feltwell T."/>
            <person name="Goble A."/>
            <person name="Hamlin N."/>
            <person name="Hauser H."/>
            <person name="Holroyd S."/>
            <person name="Jagels K."/>
            <person name="Leather S."/>
            <person name="Moule S."/>
            <person name="Norberczak H."/>
            <person name="O'Neil S."/>
            <person name="Ormond D."/>
            <person name="Price C."/>
            <person name="Rabbinowitsch E."/>
            <person name="Rutter S."/>
            <person name="Sanders M."/>
            <person name="Saunders D."/>
            <person name="Seeger K."/>
            <person name="Sharp S."/>
            <person name="Simmonds M."/>
            <person name="Skelton J."/>
            <person name="Squares R."/>
            <person name="Squares S."/>
            <person name="Stevens K."/>
            <person name="Unwin L."/>
            <person name="Whitehead S."/>
            <person name="Barrell B.G."/>
            <person name="Maskell D.J."/>
        </authorList>
    </citation>
    <scope>NUCLEOTIDE SEQUENCE [LARGE SCALE GENOMIC DNA]</scope>
    <source>
        <strain>Tohama I / ATCC BAA-589 / NCTC 13251</strain>
    </source>
</reference>
<feature type="chain" id="PRO_0000102292" description="Lipoyl synthase">
    <location>
        <begin position="1"/>
        <end position="333"/>
    </location>
</feature>
<feature type="domain" description="Radical SAM core" evidence="2">
    <location>
        <begin position="91"/>
        <end position="309"/>
    </location>
</feature>
<feature type="region of interest" description="Disordered" evidence="3">
    <location>
        <begin position="1"/>
        <end position="34"/>
    </location>
</feature>
<feature type="compositionally biased region" description="Polar residues" evidence="3">
    <location>
        <begin position="1"/>
        <end position="15"/>
    </location>
</feature>
<feature type="binding site" evidence="1">
    <location>
        <position position="80"/>
    </location>
    <ligand>
        <name>[4Fe-4S] cluster</name>
        <dbReference type="ChEBI" id="CHEBI:49883"/>
        <label>1</label>
    </ligand>
</feature>
<feature type="binding site" evidence="1">
    <location>
        <position position="85"/>
    </location>
    <ligand>
        <name>[4Fe-4S] cluster</name>
        <dbReference type="ChEBI" id="CHEBI:49883"/>
        <label>1</label>
    </ligand>
</feature>
<feature type="binding site" evidence="1">
    <location>
        <position position="91"/>
    </location>
    <ligand>
        <name>[4Fe-4S] cluster</name>
        <dbReference type="ChEBI" id="CHEBI:49883"/>
        <label>1</label>
    </ligand>
</feature>
<feature type="binding site" evidence="1">
    <location>
        <position position="106"/>
    </location>
    <ligand>
        <name>[4Fe-4S] cluster</name>
        <dbReference type="ChEBI" id="CHEBI:49883"/>
        <label>2</label>
        <note>4Fe-4S-S-AdoMet</note>
    </ligand>
</feature>
<feature type="binding site" evidence="1">
    <location>
        <position position="110"/>
    </location>
    <ligand>
        <name>[4Fe-4S] cluster</name>
        <dbReference type="ChEBI" id="CHEBI:49883"/>
        <label>2</label>
        <note>4Fe-4S-S-AdoMet</note>
    </ligand>
</feature>
<feature type="binding site" evidence="1">
    <location>
        <position position="113"/>
    </location>
    <ligand>
        <name>[4Fe-4S] cluster</name>
        <dbReference type="ChEBI" id="CHEBI:49883"/>
        <label>2</label>
        <note>4Fe-4S-S-AdoMet</note>
    </ligand>
</feature>
<feature type="binding site" evidence="1">
    <location>
        <position position="320"/>
    </location>
    <ligand>
        <name>[4Fe-4S] cluster</name>
        <dbReference type="ChEBI" id="CHEBI:49883"/>
        <label>1</label>
    </ligand>
</feature>
<comment type="function">
    <text evidence="1">Catalyzes the radical-mediated insertion of two sulfur atoms into the C-6 and C-8 positions of the octanoyl moiety bound to the lipoyl domains of lipoate-dependent enzymes, thereby converting the octanoylated domains into lipoylated derivatives.</text>
</comment>
<comment type="catalytic activity">
    <reaction evidence="1">
        <text>[[Fe-S] cluster scaffold protein carrying a second [4Fe-4S](2+) cluster] + N(6)-octanoyl-L-lysyl-[protein] + 2 oxidized [2Fe-2S]-[ferredoxin] + 2 S-adenosyl-L-methionine + 4 H(+) = [[Fe-S] cluster scaffold protein] + N(6)-[(R)-dihydrolipoyl]-L-lysyl-[protein] + 4 Fe(3+) + 2 hydrogen sulfide + 2 5'-deoxyadenosine + 2 L-methionine + 2 reduced [2Fe-2S]-[ferredoxin]</text>
        <dbReference type="Rhea" id="RHEA:16585"/>
        <dbReference type="Rhea" id="RHEA-COMP:9928"/>
        <dbReference type="Rhea" id="RHEA-COMP:10000"/>
        <dbReference type="Rhea" id="RHEA-COMP:10001"/>
        <dbReference type="Rhea" id="RHEA-COMP:10475"/>
        <dbReference type="Rhea" id="RHEA-COMP:14568"/>
        <dbReference type="Rhea" id="RHEA-COMP:14569"/>
        <dbReference type="ChEBI" id="CHEBI:15378"/>
        <dbReference type="ChEBI" id="CHEBI:17319"/>
        <dbReference type="ChEBI" id="CHEBI:29034"/>
        <dbReference type="ChEBI" id="CHEBI:29919"/>
        <dbReference type="ChEBI" id="CHEBI:33722"/>
        <dbReference type="ChEBI" id="CHEBI:33737"/>
        <dbReference type="ChEBI" id="CHEBI:33738"/>
        <dbReference type="ChEBI" id="CHEBI:57844"/>
        <dbReference type="ChEBI" id="CHEBI:59789"/>
        <dbReference type="ChEBI" id="CHEBI:78809"/>
        <dbReference type="ChEBI" id="CHEBI:83100"/>
        <dbReference type="EC" id="2.8.1.8"/>
    </reaction>
</comment>
<comment type="cofactor">
    <cofactor evidence="1">
        <name>[4Fe-4S] cluster</name>
        <dbReference type="ChEBI" id="CHEBI:49883"/>
    </cofactor>
    <text evidence="1">Binds 2 [4Fe-4S] clusters per subunit. One cluster is coordinated with 3 cysteines and an exchangeable S-adenosyl-L-methionine.</text>
</comment>
<comment type="pathway">
    <text evidence="1">Protein modification; protein lipoylation via endogenous pathway; protein N(6)-(lipoyl)lysine from octanoyl-[acyl-carrier-protein]: step 2/2.</text>
</comment>
<comment type="subcellular location">
    <subcellularLocation>
        <location evidence="1">Cytoplasm</location>
    </subcellularLocation>
</comment>
<comment type="similarity">
    <text evidence="1">Belongs to the radical SAM superfamily. Lipoyl synthase family.</text>
</comment>
<sequence>MSTLVESPVPSNDSQAAAPAAYDPTQKQKSQAKTARIPIKVVAAEKLKKPEWIRVRAAAPGSRFYDIKRILREHNLHTVCEEASCPNIGECFGKGTATFMIMGDKCTRRCPFCDVGHGRPDPLDTQEPENLARTIAALKLSYVVITSVDRDDLRDGGAAHFVECIAKVREYSPDTRIEVLVPDFRGRLDRALHILNSGPPDVMNHNLETVPRLYKQARPGSDYAHSLKLLAEFKKLHPEVPTKSGLMLGLGETDEEILQVMRDMREHNVDMLTIGQYLQPSEHHLPVLRYVHPDTFAMFEREAYAMGFTHAAVGAMVRSSYHADQQAHAAGVN</sequence>
<proteinExistence type="inferred from homology"/>
<evidence type="ECO:0000255" key="1">
    <source>
        <dbReference type="HAMAP-Rule" id="MF_00206"/>
    </source>
</evidence>
<evidence type="ECO:0000255" key="2">
    <source>
        <dbReference type="PROSITE-ProRule" id="PRU01266"/>
    </source>
</evidence>
<evidence type="ECO:0000256" key="3">
    <source>
        <dbReference type="SAM" id="MobiDB-lite"/>
    </source>
</evidence>
<name>LIPA_BORPE</name>
<protein>
    <recommendedName>
        <fullName evidence="1">Lipoyl synthase</fullName>
        <ecNumber evidence="1">2.8.1.8</ecNumber>
    </recommendedName>
    <alternativeName>
        <fullName evidence="1">Lip-syn</fullName>
        <shortName evidence="1">LS</shortName>
    </alternativeName>
    <alternativeName>
        <fullName evidence="1">Lipoate synthase</fullName>
    </alternativeName>
    <alternativeName>
        <fullName evidence="1">Lipoic acid synthase</fullName>
    </alternativeName>
    <alternativeName>
        <fullName evidence="1">Sulfur insertion protein LipA</fullName>
    </alternativeName>
</protein>
<dbReference type="EC" id="2.8.1.8" evidence="1"/>
<dbReference type="EMBL" id="BX640411">
    <property type="protein sequence ID" value="CAE40486.1"/>
    <property type="molecule type" value="Genomic_DNA"/>
</dbReference>
<dbReference type="RefSeq" id="NP_879009.1">
    <property type="nucleotide sequence ID" value="NC_002929.2"/>
</dbReference>
<dbReference type="RefSeq" id="WP_003807146.1">
    <property type="nucleotide sequence ID" value="NZ_CP039022.1"/>
</dbReference>
<dbReference type="SMR" id="Q7W0K8"/>
<dbReference type="STRING" id="257313.BP0106"/>
<dbReference type="PaxDb" id="257313-BP0106"/>
<dbReference type="GeneID" id="69603635"/>
<dbReference type="KEGG" id="bpe:BP0106"/>
<dbReference type="PATRIC" id="fig|257313.5.peg.107"/>
<dbReference type="eggNOG" id="COG0320">
    <property type="taxonomic scope" value="Bacteria"/>
</dbReference>
<dbReference type="HOGENOM" id="CLU_033144_2_1_4"/>
<dbReference type="UniPathway" id="UPA00538">
    <property type="reaction ID" value="UER00593"/>
</dbReference>
<dbReference type="Proteomes" id="UP000002676">
    <property type="component" value="Chromosome"/>
</dbReference>
<dbReference type="GO" id="GO:0005737">
    <property type="term" value="C:cytoplasm"/>
    <property type="evidence" value="ECO:0007669"/>
    <property type="project" value="UniProtKB-SubCell"/>
</dbReference>
<dbReference type="GO" id="GO:0051539">
    <property type="term" value="F:4 iron, 4 sulfur cluster binding"/>
    <property type="evidence" value="ECO:0007669"/>
    <property type="project" value="UniProtKB-UniRule"/>
</dbReference>
<dbReference type="GO" id="GO:0016992">
    <property type="term" value="F:lipoate synthase activity"/>
    <property type="evidence" value="ECO:0007669"/>
    <property type="project" value="UniProtKB-UniRule"/>
</dbReference>
<dbReference type="GO" id="GO:0046872">
    <property type="term" value="F:metal ion binding"/>
    <property type="evidence" value="ECO:0007669"/>
    <property type="project" value="UniProtKB-KW"/>
</dbReference>
<dbReference type="CDD" id="cd01335">
    <property type="entry name" value="Radical_SAM"/>
    <property type="match status" value="1"/>
</dbReference>
<dbReference type="FunFam" id="3.20.20.70:FF:000040">
    <property type="entry name" value="Lipoyl synthase"/>
    <property type="match status" value="1"/>
</dbReference>
<dbReference type="Gene3D" id="3.20.20.70">
    <property type="entry name" value="Aldolase class I"/>
    <property type="match status" value="1"/>
</dbReference>
<dbReference type="HAMAP" id="MF_00206">
    <property type="entry name" value="Lipoyl_synth"/>
    <property type="match status" value="1"/>
</dbReference>
<dbReference type="InterPro" id="IPR013785">
    <property type="entry name" value="Aldolase_TIM"/>
</dbReference>
<dbReference type="InterPro" id="IPR006638">
    <property type="entry name" value="Elp3/MiaA/NifB-like_rSAM"/>
</dbReference>
<dbReference type="InterPro" id="IPR031691">
    <property type="entry name" value="LIAS_N"/>
</dbReference>
<dbReference type="InterPro" id="IPR003698">
    <property type="entry name" value="Lipoyl_synth"/>
</dbReference>
<dbReference type="InterPro" id="IPR007197">
    <property type="entry name" value="rSAM"/>
</dbReference>
<dbReference type="NCBIfam" id="TIGR00510">
    <property type="entry name" value="lipA"/>
    <property type="match status" value="1"/>
</dbReference>
<dbReference type="NCBIfam" id="NF004019">
    <property type="entry name" value="PRK05481.1"/>
    <property type="match status" value="1"/>
</dbReference>
<dbReference type="NCBIfam" id="NF009544">
    <property type="entry name" value="PRK12928.1"/>
    <property type="match status" value="1"/>
</dbReference>
<dbReference type="PANTHER" id="PTHR10949">
    <property type="entry name" value="LIPOYL SYNTHASE"/>
    <property type="match status" value="1"/>
</dbReference>
<dbReference type="PANTHER" id="PTHR10949:SF0">
    <property type="entry name" value="LIPOYL SYNTHASE, MITOCHONDRIAL"/>
    <property type="match status" value="1"/>
</dbReference>
<dbReference type="Pfam" id="PF16881">
    <property type="entry name" value="LIAS_N"/>
    <property type="match status" value="1"/>
</dbReference>
<dbReference type="Pfam" id="PF04055">
    <property type="entry name" value="Radical_SAM"/>
    <property type="match status" value="1"/>
</dbReference>
<dbReference type="PIRSF" id="PIRSF005963">
    <property type="entry name" value="Lipoyl_synth"/>
    <property type="match status" value="1"/>
</dbReference>
<dbReference type="SFLD" id="SFLDF00271">
    <property type="entry name" value="lipoyl_synthase"/>
    <property type="match status" value="1"/>
</dbReference>
<dbReference type="SFLD" id="SFLDS00029">
    <property type="entry name" value="Radical_SAM"/>
    <property type="match status" value="1"/>
</dbReference>
<dbReference type="SMART" id="SM00729">
    <property type="entry name" value="Elp3"/>
    <property type="match status" value="1"/>
</dbReference>
<dbReference type="SUPFAM" id="SSF102114">
    <property type="entry name" value="Radical SAM enzymes"/>
    <property type="match status" value="1"/>
</dbReference>
<dbReference type="PROSITE" id="PS51918">
    <property type="entry name" value="RADICAL_SAM"/>
    <property type="match status" value="1"/>
</dbReference>
<organism>
    <name type="scientific">Bordetella pertussis (strain Tohama I / ATCC BAA-589 / NCTC 13251)</name>
    <dbReference type="NCBI Taxonomy" id="257313"/>
    <lineage>
        <taxon>Bacteria</taxon>
        <taxon>Pseudomonadati</taxon>
        <taxon>Pseudomonadota</taxon>
        <taxon>Betaproteobacteria</taxon>
        <taxon>Burkholderiales</taxon>
        <taxon>Alcaligenaceae</taxon>
        <taxon>Bordetella</taxon>
    </lineage>
</organism>
<gene>
    <name evidence="1" type="primary">lipA</name>
    <name type="ordered locus">BP0106</name>
</gene>